<comment type="function">
    <text evidence="1">Removes the 2'-phosphate from RNA via an intermediate in which the phosphate is ADP-ribosylated by NAD followed by a presumed transesterification to release the RNA and generate ADP-ribose 1''-2''-cyclic phosphate (APPR&gt;P). May function as an ADP-ribosylase.</text>
</comment>
<comment type="similarity">
    <text evidence="1">Belongs to the KptA/TPT1 family.</text>
</comment>
<keyword id="KW-0520">NAD</keyword>
<keyword id="KW-1185">Reference proteome</keyword>
<keyword id="KW-0808">Transferase</keyword>
<evidence type="ECO:0000255" key="1">
    <source>
        <dbReference type="HAMAP-Rule" id="MF_00299"/>
    </source>
</evidence>
<sequence>MSDSRLVKISKYLSKYLRHTPDAIGIKLAPGGWVAVDELITACAKNKFPITRQELEAVVESSEKQRFSFDSTGTLIRANQGHSVEVDLQLEPVVPPDELYHGTGHKSVDSIMETGLCKMSRHHVHLSKDIATAQTVGARHGKPVVFAISAAAMHQAGYIFYCSDNGVWLVDRVPPEYLQKI</sequence>
<reference key="1">
    <citation type="journal article" date="2013" name="Plant Physiol.">
        <title>A Nostoc punctiforme Sugar Transporter Necessary to Establish a Cyanobacterium-Plant Symbiosis.</title>
        <authorList>
            <person name="Ekman M."/>
            <person name="Picossi S."/>
            <person name="Campbell E.L."/>
            <person name="Meeks J.C."/>
            <person name="Flores E."/>
        </authorList>
    </citation>
    <scope>NUCLEOTIDE SEQUENCE [LARGE SCALE GENOMIC DNA]</scope>
    <source>
        <strain>ATCC 29133 / PCC 73102</strain>
    </source>
</reference>
<proteinExistence type="inferred from homology"/>
<gene>
    <name evidence="1" type="primary">kptA</name>
    <name type="ordered locus">Npun_F4780</name>
</gene>
<name>KPTA_NOSP7</name>
<dbReference type="EC" id="2.7.1.-" evidence="1"/>
<dbReference type="EMBL" id="CP001037">
    <property type="protein sequence ID" value="ACC83129.1"/>
    <property type="molecule type" value="Genomic_DNA"/>
</dbReference>
<dbReference type="RefSeq" id="WP_012411085.1">
    <property type="nucleotide sequence ID" value="NC_010628.1"/>
</dbReference>
<dbReference type="SMR" id="B2IZ22"/>
<dbReference type="STRING" id="63737.Npun_F4780"/>
<dbReference type="EnsemblBacteria" id="ACC83129">
    <property type="protein sequence ID" value="ACC83129"/>
    <property type="gene ID" value="Npun_F4780"/>
</dbReference>
<dbReference type="KEGG" id="npu:Npun_F4780"/>
<dbReference type="eggNOG" id="COG1859">
    <property type="taxonomic scope" value="Bacteria"/>
</dbReference>
<dbReference type="HOGENOM" id="CLU_052998_4_0_3"/>
<dbReference type="OrthoDB" id="4537997at2"/>
<dbReference type="PhylomeDB" id="B2IZ22"/>
<dbReference type="Proteomes" id="UP000001191">
    <property type="component" value="Chromosome"/>
</dbReference>
<dbReference type="GO" id="GO:0003950">
    <property type="term" value="F:NAD+ poly-ADP-ribosyltransferase activity"/>
    <property type="evidence" value="ECO:0007669"/>
    <property type="project" value="InterPro"/>
</dbReference>
<dbReference type="GO" id="GO:0000215">
    <property type="term" value="F:tRNA 2'-phosphotransferase activity"/>
    <property type="evidence" value="ECO:0007669"/>
    <property type="project" value="TreeGrafter"/>
</dbReference>
<dbReference type="GO" id="GO:0006388">
    <property type="term" value="P:tRNA splicing, via endonucleolytic cleavage and ligation"/>
    <property type="evidence" value="ECO:0007669"/>
    <property type="project" value="UniProtKB-UniRule"/>
</dbReference>
<dbReference type="Gene3D" id="3.20.170.30">
    <property type="match status" value="1"/>
</dbReference>
<dbReference type="Gene3D" id="1.10.10.970">
    <property type="entry name" value="RNA 2'-phosphotransferase, Tpt1/KptA family, N-terminal domain"/>
    <property type="match status" value="1"/>
</dbReference>
<dbReference type="HAMAP" id="MF_00299">
    <property type="entry name" value="KptA"/>
    <property type="match status" value="1"/>
</dbReference>
<dbReference type="InterPro" id="IPR002745">
    <property type="entry name" value="Ptrans_KptA/Tpt1"/>
</dbReference>
<dbReference type="InterPro" id="IPR042081">
    <property type="entry name" value="RNA_2'-PTrans_C"/>
</dbReference>
<dbReference type="InterPro" id="IPR022928">
    <property type="entry name" value="RNA_2'-PTrans_KptA"/>
</dbReference>
<dbReference type="InterPro" id="IPR042080">
    <property type="entry name" value="RNA_2'-PTrans_N"/>
</dbReference>
<dbReference type="NCBIfam" id="NF002014">
    <property type="entry name" value="PRK00819.1-4"/>
    <property type="match status" value="1"/>
</dbReference>
<dbReference type="PANTHER" id="PTHR12684">
    <property type="entry name" value="PUTATIVE PHOSPHOTRANSFERASE"/>
    <property type="match status" value="1"/>
</dbReference>
<dbReference type="PANTHER" id="PTHR12684:SF2">
    <property type="entry name" value="TRNA 2'-PHOSPHOTRANSFERASE 1"/>
    <property type="match status" value="1"/>
</dbReference>
<dbReference type="Pfam" id="PF01885">
    <property type="entry name" value="PTS_2-RNA"/>
    <property type="match status" value="1"/>
</dbReference>
<dbReference type="SUPFAM" id="SSF56399">
    <property type="entry name" value="ADP-ribosylation"/>
    <property type="match status" value="1"/>
</dbReference>
<protein>
    <recommendedName>
        <fullName evidence="1">Probable RNA 2'-phosphotransferase</fullName>
        <ecNumber evidence="1">2.7.1.-</ecNumber>
    </recommendedName>
</protein>
<feature type="chain" id="PRO_1000115313" description="Probable RNA 2'-phosphotransferase">
    <location>
        <begin position="1"/>
        <end position="181"/>
    </location>
</feature>
<accession>B2IZ22</accession>
<organism>
    <name type="scientific">Nostoc punctiforme (strain ATCC 29133 / PCC 73102)</name>
    <dbReference type="NCBI Taxonomy" id="63737"/>
    <lineage>
        <taxon>Bacteria</taxon>
        <taxon>Bacillati</taxon>
        <taxon>Cyanobacteriota</taxon>
        <taxon>Cyanophyceae</taxon>
        <taxon>Nostocales</taxon>
        <taxon>Nostocaceae</taxon>
        <taxon>Nostoc</taxon>
    </lineage>
</organism>